<keyword id="KW-0072">Autophagy</keyword>
<keyword id="KW-0963">Cytoplasm</keyword>
<keyword id="KW-0968">Cytoplasmic vesicle</keyword>
<keyword id="KW-0206">Cytoskeleton</keyword>
<keyword id="KW-0256">Endoplasmic reticulum</keyword>
<keyword id="KW-0333">Golgi apparatus</keyword>
<keyword id="KW-0449">Lipoprotein</keyword>
<keyword id="KW-0472">Membrane</keyword>
<keyword id="KW-0493">Microtubule</keyword>
<keyword id="KW-1185">Reference proteome</keyword>
<sequence length="117" mass="14063">MKFQYKEDHPFEYRKKEGEKIRKKYPDRVPVIVEKAPKARVPDLDKRKYLVPSDLTVGQFYFLIRKRIHLRPEDALFFFVNNTIPPTSATMGQLYEDNREEDYFLYVAYSDESVYGK</sequence>
<comment type="function">
    <text evidence="3">Ubiquitin-like modifier that increases cell-surface expression of kappa-type opioid receptor through facilitating anterograde intracellular trafficking of the receptor. Involved in formation of autophagosomal vacuoles. While LC3s are involved in elongation of the phagophore membrane, the GABARAP/GATE-16 subfamily is essential for a later stage in autophagosome maturation. Through its interaction with the reticulophagy receptor TEX264, participates in the remodeling of subdomains of the endoplasmic reticulum into autophagosomes upon nutrient stress, which then fuse with lysosomes for endoplasmic reticulum turnover.</text>
</comment>
<comment type="subunit">
    <text evidence="2 3">Interacts with ATG13, OPRK1, RB1CC1 and ULK1. Interacts with TP53INP1 and TP53INP2. Directly interacts with SQSTM1. Interacts with ATG3, ATG7 and MAP15. Interacts with TECPR2. Interacts with TBC1D5. Interacts with MAPK15. Interacts with TRIM5. Interacts with MEFV and TRIM21. Interacts with WDFY3. Interacts with the reticulophagy receptor TEX264. Interacts with UBA5. Interacts with KBTBD6 and KBTBD7; the interaction is direct. Interacts with reticulophagy regulators RETREG1, RETREG2 and RETREG3. Interacts with IRGM (By similarity). Interacts with DNM2 (By similarity). Interacts with NCOA4 (via C-terminus) (By similarity).</text>
</comment>
<comment type="subcellular location">
    <subcellularLocation>
        <location evidence="3">Cytoplasmic vesicle</location>
        <location evidence="3">Autophagosome</location>
    </subcellularLocation>
    <subcellularLocation>
        <location evidence="3">Cytoplasmic vesicle membrane</location>
        <topology evidence="3">Lipid-anchor</topology>
    </subcellularLocation>
    <subcellularLocation>
        <location evidence="1">Cytoplasm</location>
        <location evidence="1">Cytoskeleton</location>
    </subcellularLocation>
    <subcellularLocation>
        <location evidence="1">Endoplasmic reticulum</location>
    </subcellularLocation>
    <subcellularLocation>
        <location evidence="1">Golgi apparatus</location>
    </subcellularLocation>
</comment>
<comment type="PTM">
    <text evidence="2 3">The precursor molecule is cleaved by ATG4 (ATG4A, ATG4B, ATG4C or ATG4D) to expose the glycine at the C-terminus and form the cytosolic form, GABARAPL1-I. The processed form is then activated by APG7L/ATG7, transferred to ATG3 and conjugated to phosphatidylethanolamine (PE) phospholipid to form the membrane-bound form, GABARAPL1-II. During non-canonical autophagy, the processed form is conjugated to phosphatidylserine (PS) phospholipid. ATG4 proteins also mediate the delipidation of PE-conjugated forms required for GABARAPL1 recycling when autophagosomes fuse with lysosomes. In addition, ATG4B and ATG4D mediate delipidation of ATG8 proteins conjugated to PS during non-canonical autophagy. ATG4B constitutes the major protein for proteolytic activation (By similarity). ATG4D is the main enzyme for delipidation activity (By similarity).</text>
</comment>
<comment type="similarity">
    <text evidence="4">Belongs to the ATG8 family.</text>
</comment>
<reference key="1">
    <citation type="submission" date="2004-11" db="EMBL/GenBank/DDBJ databases">
        <authorList>
            <consortium name="The German cDNA consortium"/>
        </authorList>
    </citation>
    <scope>NUCLEOTIDE SEQUENCE [LARGE SCALE MRNA]</scope>
    <source>
        <tissue>Kidney</tissue>
    </source>
</reference>
<proteinExistence type="inferred from homology"/>
<accession>Q5RF21</accession>
<protein>
    <recommendedName>
        <fullName evidence="3">Gamma-aminobutyric acid receptor-associated protein-like 1</fullName>
    </recommendedName>
    <alternativeName>
        <fullName>GABA(A) receptor-associated protein-like 1</fullName>
    </alternativeName>
</protein>
<feature type="chain" id="PRO_0000212371" description="Gamma-aminobutyric acid receptor-associated protein-like 1">
    <location>
        <begin position="1"/>
        <end position="116"/>
    </location>
</feature>
<feature type="propeptide" id="PRO_0000420210" description="Removed in mature form" evidence="3">
    <location>
        <position position="117"/>
    </location>
</feature>
<feature type="site" description="Cleavage; by ATG4B" evidence="3">
    <location>
        <begin position="116"/>
        <end position="117"/>
    </location>
</feature>
<feature type="lipid moiety-binding region" description="Phosphatidylethanolamine amidated glycine; alternate" evidence="3">
    <location>
        <position position="116"/>
    </location>
</feature>
<feature type="lipid moiety-binding region" description="Phosphatidylserine amidated glycine; alternate" evidence="3">
    <location>
        <position position="116"/>
    </location>
</feature>
<dbReference type="EMBL" id="CR857340">
    <property type="protein sequence ID" value="CAH89636.1"/>
    <property type="molecule type" value="mRNA"/>
</dbReference>
<dbReference type="RefSeq" id="NP_001127179.1">
    <property type="nucleotide sequence ID" value="NM_001133707.1"/>
</dbReference>
<dbReference type="BMRB" id="Q5RF21"/>
<dbReference type="SMR" id="Q5RF21"/>
<dbReference type="FunCoup" id="Q5RF21">
    <property type="interactions" value="1535"/>
</dbReference>
<dbReference type="STRING" id="9601.ENSPPYP00000008889"/>
<dbReference type="GeneID" id="100174231"/>
<dbReference type="KEGG" id="pon:100174231"/>
<dbReference type="CTD" id="23710"/>
<dbReference type="eggNOG" id="KOG1654">
    <property type="taxonomic scope" value="Eukaryota"/>
</dbReference>
<dbReference type="InParanoid" id="Q5RF21"/>
<dbReference type="OrthoDB" id="6738456at2759"/>
<dbReference type="Proteomes" id="UP000001595">
    <property type="component" value="Unplaced"/>
</dbReference>
<dbReference type="GO" id="GO:0005776">
    <property type="term" value="C:autophagosome"/>
    <property type="evidence" value="ECO:0007669"/>
    <property type="project" value="UniProtKB-SubCell"/>
</dbReference>
<dbReference type="GO" id="GO:0030659">
    <property type="term" value="C:cytoplasmic vesicle membrane"/>
    <property type="evidence" value="ECO:0007669"/>
    <property type="project" value="UniProtKB-SubCell"/>
</dbReference>
<dbReference type="GO" id="GO:0005783">
    <property type="term" value="C:endoplasmic reticulum"/>
    <property type="evidence" value="ECO:0007669"/>
    <property type="project" value="UniProtKB-SubCell"/>
</dbReference>
<dbReference type="GO" id="GO:0005794">
    <property type="term" value="C:Golgi apparatus"/>
    <property type="evidence" value="ECO:0007669"/>
    <property type="project" value="UniProtKB-SubCell"/>
</dbReference>
<dbReference type="GO" id="GO:0005874">
    <property type="term" value="C:microtubule"/>
    <property type="evidence" value="ECO:0007669"/>
    <property type="project" value="UniProtKB-KW"/>
</dbReference>
<dbReference type="GO" id="GO:0006914">
    <property type="term" value="P:autophagy"/>
    <property type="evidence" value="ECO:0007669"/>
    <property type="project" value="UniProtKB-KW"/>
</dbReference>
<dbReference type="CDD" id="cd16127">
    <property type="entry name" value="Ubl_ATG8_GABARAP_like"/>
    <property type="match status" value="1"/>
</dbReference>
<dbReference type="FunFam" id="3.10.20.90:FF:000037">
    <property type="entry name" value="Gamma-aminobutyric acid receptor-associated protein-like 1"/>
    <property type="match status" value="1"/>
</dbReference>
<dbReference type="Gene3D" id="3.10.20.90">
    <property type="entry name" value="Phosphatidylinositol 3-kinase Catalytic Subunit, Chain A, domain 1"/>
    <property type="match status" value="1"/>
</dbReference>
<dbReference type="InterPro" id="IPR004241">
    <property type="entry name" value="Atg8-like"/>
</dbReference>
<dbReference type="InterPro" id="IPR029071">
    <property type="entry name" value="Ubiquitin-like_domsf"/>
</dbReference>
<dbReference type="PANTHER" id="PTHR10969">
    <property type="entry name" value="MICROTUBULE-ASSOCIATED PROTEINS 1A/1B LIGHT CHAIN 3-RELATED"/>
    <property type="match status" value="1"/>
</dbReference>
<dbReference type="Pfam" id="PF02991">
    <property type="entry name" value="ATG8"/>
    <property type="match status" value="1"/>
</dbReference>
<dbReference type="SUPFAM" id="SSF54236">
    <property type="entry name" value="Ubiquitin-like"/>
    <property type="match status" value="1"/>
</dbReference>
<organism>
    <name type="scientific">Pongo abelii</name>
    <name type="common">Sumatran orangutan</name>
    <name type="synonym">Pongo pygmaeus abelii</name>
    <dbReference type="NCBI Taxonomy" id="9601"/>
    <lineage>
        <taxon>Eukaryota</taxon>
        <taxon>Metazoa</taxon>
        <taxon>Chordata</taxon>
        <taxon>Craniata</taxon>
        <taxon>Vertebrata</taxon>
        <taxon>Euteleostomi</taxon>
        <taxon>Mammalia</taxon>
        <taxon>Eutheria</taxon>
        <taxon>Euarchontoglires</taxon>
        <taxon>Primates</taxon>
        <taxon>Haplorrhini</taxon>
        <taxon>Catarrhini</taxon>
        <taxon>Hominidae</taxon>
        <taxon>Pongo</taxon>
    </lineage>
</organism>
<name>GBRL1_PONAB</name>
<evidence type="ECO:0000250" key="1">
    <source>
        <dbReference type="UniProtKB" id="Q0VGK0"/>
    </source>
</evidence>
<evidence type="ECO:0000250" key="2">
    <source>
        <dbReference type="UniProtKB" id="Q8R3R8"/>
    </source>
</evidence>
<evidence type="ECO:0000250" key="3">
    <source>
        <dbReference type="UniProtKB" id="Q9H0R8"/>
    </source>
</evidence>
<evidence type="ECO:0000305" key="4"/>
<gene>
    <name evidence="3" type="primary">GABARAPL1</name>
</gene>